<name>VPS29_RAT</name>
<keyword id="KW-0007">Acetylation</keyword>
<keyword id="KW-0025">Alternative splicing</keyword>
<keyword id="KW-0963">Cytoplasm</keyword>
<keyword id="KW-0967">Endosome</keyword>
<keyword id="KW-0472">Membrane</keyword>
<keyword id="KW-0479">Metal-binding</keyword>
<keyword id="KW-0653">Protein transport</keyword>
<keyword id="KW-1185">Reference proteome</keyword>
<keyword id="KW-0813">Transport</keyword>
<keyword id="KW-0862">Zinc</keyword>
<evidence type="ECO:0000250" key="1">
    <source>
        <dbReference type="UniProtKB" id="Q9QZ88"/>
    </source>
</evidence>
<evidence type="ECO:0000250" key="2">
    <source>
        <dbReference type="UniProtKB" id="Q9UBQ0"/>
    </source>
</evidence>
<evidence type="ECO:0000255" key="3"/>
<evidence type="ECO:0000269" key="4">
    <source>
    </source>
</evidence>
<evidence type="ECO:0000303" key="5">
    <source>
    </source>
</evidence>
<evidence type="ECO:0000305" key="6"/>
<evidence type="ECO:0000312" key="7">
    <source>
        <dbReference type="EMBL" id="AAI67055.1"/>
    </source>
</evidence>
<evidence type="ECO:0000312" key="8">
    <source>
        <dbReference type="RGD" id="1308332"/>
    </source>
</evidence>
<accession>B2RZ78</accession>
<accession>A6J1A4</accession>
<reference evidence="6" key="1">
    <citation type="submission" date="2005-07" db="EMBL/GenBank/DDBJ databases">
        <authorList>
            <person name="Mural R.J."/>
            <person name="Adams M.D."/>
            <person name="Myers E.W."/>
            <person name="Smith H.O."/>
            <person name="Venter J.C."/>
        </authorList>
    </citation>
    <scope>NUCLEOTIDE SEQUENCE [LARGE SCALE GENOMIC DNA]</scope>
</reference>
<reference evidence="6 7" key="2">
    <citation type="journal article" date="2004" name="Genome Res.">
        <title>The status, quality, and expansion of the NIH full-length cDNA project: the Mammalian Gene Collection (MGC).</title>
        <authorList>
            <consortium name="The MGC Project Team"/>
        </authorList>
    </citation>
    <scope>NUCLEOTIDE SEQUENCE [LARGE SCALE MRNA] (ISOFORM 2)</scope>
    <source>
        <tissue evidence="7">Ovary</tissue>
    </source>
</reference>
<reference evidence="6" key="3">
    <citation type="submission" date="2008-12" db="UniProtKB">
        <authorList>
            <person name="Maurya D.K."/>
            <person name="Bhargava P."/>
        </authorList>
    </citation>
    <scope>IDENTIFICATION BY MASS SPECTROMETRY (ISOFORM 1)</scope>
</reference>
<organism>
    <name type="scientific">Rattus norvegicus</name>
    <name type="common">Rat</name>
    <dbReference type="NCBI Taxonomy" id="10116"/>
    <lineage>
        <taxon>Eukaryota</taxon>
        <taxon>Metazoa</taxon>
        <taxon>Chordata</taxon>
        <taxon>Craniata</taxon>
        <taxon>Vertebrata</taxon>
        <taxon>Euteleostomi</taxon>
        <taxon>Mammalia</taxon>
        <taxon>Eutheria</taxon>
        <taxon>Euarchontoglires</taxon>
        <taxon>Glires</taxon>
        <taxon>Rodentia</taxon>
        <taxon>Myomorpha</taxon>
        <taxon>Muroidea</taxon>
        <taxon>Muridae</taxon>
        <taxon>Murinae</taxon>
        <taxon>Rattus</taxon>
    </lineage>
</organism>
<comment type="function">
    <text evidence="1 2">Component of the commander complex that is essential for endosomal recycling of transmembrane cargos; the commander complex is composed of the CCC subcomplex and the retriever subcomplex (By similarity). Component of the retriever complex, which is a heterotrimeric complex related to retromer cargo-selective complex (CSC) and essential for retromer-independent retrieval and recycling of numerous cargos such as integrin alpha-5/beta-1 (ITGA5:ITGB1) (By similarity). Component of the retromer cargo-selective complex (CSC). The CSC is believed to be the core functional component of retromer or respective retromer complex variants acting to prevent missorting of selected transmembrane cargo proteins into the lysosomal degradation pathway. The recruitment of the CSC to the endosomal membrane involves RAB7A and SNX3. The SNX-BAR retromer mediates retrograde transport of cargo proteins from endosomes to the trans-Golgi network (TGN) and is involved in endosome-to-plasma membrane transport for cargo protein recycling. The SNX3-retromer mediates the retrograde endosome-to-TGN transport of WLS distinct from the SNX-BAR retromer pathway. The SNX27-retromer is believed to be involved in endosome-to-plasma membrane trafficking and recycling of a broad spectrum of cargo proteins. The CSC seems to act as recruitment hub for other proteins, such as the WASH complex and TBC1D5. Required to regulate transcytosis of the polymeric immunoglobulin receptor (pIgR-pIgA). In the endosomes, retriever complex drives the retrieval and recycling of NxxY-motif-containing cargo proteins by coupling to SNX17, a cargo essential for the homeostatic maintenance of numerous cell surface proteins associated with processes that include cell migration, cell adhesion, nutrient supply and cell signaling (By similarity). The recruitment of the retriever complex to the endosomal membrane involves CCC and WASH complexes (By similarity). Involved in GLUT1 endosome-to-plasma membrane trafficking; the function is dependent of association with ANKRD27 (By similarity).</text>
</comment>
<comment type="subunit">
    <text evidence="1 2">Component of the commander complex consisting of the CCC subcomplex and the retriever subcomplex (By similarity). Component of the heterotrimeric retriever complex formed by VPS26C, VPS29 and VPS35L; within the complex interacts with VPS35L (By similarity). Component of the heterotrimeric retromer cargo-selective complex (CSC), also described as vacuolar protein sorting subcomplex (VPS), formed by VPS26 (VPS26A or VPS26B), VPS29 and VPS35 (By similarity). The CSC has a highly elongated structure with VPS26 and VPS29 binding independently at opposite distal ends of VPS35 as central platform (By similarity). The CSC is believed to associate with variable sorting nexins to form functionally distinct retromer complex variants. The originally described retromer complex (also called SNX-BAR retromer) is a pentamer containing the CSC and a heterodimeric membrane-deforming subcomplex formed between SNX1 or SNX2 and SNX5 or SNX6 (also called SNX-BAR subcomplex); the respective CSC and SNX-BAR subcomplexes associate with low affinity. The CSC associates with SNX3 to form a SNX3-retromer complex. The CSC associates with SNX27, the WASH complex and the SNX-BAR subcomplex to form the SNX27-retromer complex (By similarity). Interacts with VPS26A, VPS35, SNX1, SNX2, SNX3, SNX27, WASHC5 (By similarity). Interacts with TBC1D5; this interaction is blocked by VPS35L in the retriever complex (By similarity). Interacts with SNX17; the interaction is indirect; SNX17 (via its C-terminus) interacts with the retriever complex (via VPS26C and VPS35L) (By similarity). Interacts with VPS26B and ANKRD27 (By similarity).</text>
</comment>
<comment type="subcellular location">
    <subcellularLocation>
        <location>Cytoplasm</location>
    </subcellularLocation>
    <subcellularLocation>
        <location>Membrane</location>
        <topology>Peripheral membrane protein</topology>
    </subcellularLocation>
    <subcellularLocation>
        <location evidence="1">Endosome membrane</location>
        <topology evidence="1">Peripheral membrane protein</topology>
    </subcellularLocation>
    <subcellularLocation>
        <location evidence="6">Early endosome</location>
    </subcellularLocation>
    <subcellularLocation>
        <location evidence="6">Late endosome</location>
    </subcellularLocation>
</comment>
<comment type="alternative products">
    <event type="alternative splicing"/>
    <isoform>
        <id>B2RZ78-1</id>
        <name>1</name>
        <sequence type="displayed"/>
    </isoform>
    <isoform>
        <id>B2RZ78-2</id>
        <name evidence="4">2</name>
        <sequence type="described" ref="VSP_053030"/>
    </isoform>
</comment>
<comment type="similarity">
    <text evidence="3">Belongs to the VPS29 family.</text>
</comment>
<feature type="chain" id="PRO_0000365104" description="Vacuolar protein sorting-associated protein 29">
    <location>
        <begin position="1"/>
        <end position="182"/>
    </location>
</feature>
<feature type="modified residue" description="N6-acetyllysine" evidence="2">
    <location>
        <position position="50"/>
    </location>
</feature>
<feature type="splice variant" id="VSP_053030" description="In isoform 2." evidence="5">
    <original>M</original>
    <variation>MAGHR</variation>
    <location>
        <position position="1"/>
    </location>
</feature>
<protein>
    <recommendedName>
        <fullName evidence="2">Vacuolar protein sorting-associated protein 29</fullName>
    </recommendedName>
    <alternativeName>
        <fullName evidence="2">Vesicle protein sorting 29</fullName>
    </alternativeName>
</protein>
<gene>
    <name evidence="7 8" type="primary">Vps29</name>
</gene>
<proteinExistence type="evidence at protein level"/>
<dbReference type="EMBL" id="CH473973">
    <property type="protein sequence ID" value="EDM13693.1"/>
    <property type="molecule type" value="Genomic_DNA"/>
</dbReference>
<dbReference type="EMBL" id="BC167055">
    <property type="protein sequence ID" value="AAI67055.1"/>
    <property type="molecule type" value="mRNA"/>
</dbReference>
<dbReference type="RefSeq" id="NP_001099402.1">
    <molecule id="B2RZ78-1"/>
    <property type="nucleotide sequence ID" value="NM_001105932.1"/>
</dbReference>
<dbReference type="RefSeq" id="XP_006249424.1">
    <property type="nucleotide sequence ID" value="XM_006249362.3"/>
</dbReference>
<dbReference type="SMR" id="B2RZ78"/>
<dbReference type="BioGRID" id="252647">
    <property type="interactions" value="1"/>
</dbReference>
<dbReference type="CORUM" id="B2RZ78"/>
<dbReference type="FunCoup" id="B2RZ78">
    <property type="interactions" value="3879"/>
</dbReference>
<dbReference type="IntAct" id="B2RZ78">
    <property type="interactions" value="1"/>
</dbReference>
<dbReference type="STRING" id="10116.ENSRNOP00000068822"/>
<dbReference type="iPTMnet" id="B2RZ78"/>
<dbReference type="PhosphoSitePlus" id="B2RZ78"/>
<dbReference type="jPOST" id="B2RZ78"/>
<dbReference type="PaxDb" id="10116-ENSRNOP00000001717"/>
<dbReference type="PeptideAtlas" id="B2RZ78"/>
<dbReference type="Ensembl" id="ENSRNOT00000088905.2">
    <molecule id="B2RZ78-2"/>
    <property type="protein sequence ID" value="ENSRNOP00000074640.1"/>
    <property type="gene ID" value="ENSRNOG00000001274.8"/>
</dbReference>
<dbReference type="GeneID" id="288666"/>
<dbReference type="KEGG" id="rno:288666"/>
<dbReference type="UCSC" id="RGD:1308332">
    <molecule id="B2RZ78-1"/>
    <property type="organism name" value="rat"/>
</dbReference>
<dbReference type="AGR" id="RGD:1308332"/>
<dbReference type="CTD" id="51699"/>
<dbReference type="RGD" id="1308332">
    <property type="gene designation" value="Vps29"/>
</dbReference>
<dbReference type="VEuPathDB" id="HostDB:ENSRNOG00000001274"/>
<dbReference type="eggNOG" id="KOG3325">
    <property type="taxonomic scope" value="Eukaryota"/>
</dbReference>
<dbReference type="GeneTree" id="ENSGT00390000012669"/>
<dbReference type="InParanoid" id="B2RZ78"/>
<dbReference type="OrthoDB" id="2244at9989"/>
<dbReference type="PhylomeDB" id="B2RZ78"/>
<dbReference type="Reactome" id="R-RNO-3238698">
    <property type="pathway name" value="WNT ligand biogenesis and trafficking"/>
</dbReference>
<dbReference type="PRO" id="PR:B2RZ78"/>
<dbReference type="Proteomes" id="UP000002494">
    <property type="component" value="Chromosome 12"/>
</dbReference>
<dbReference type="Proteomes" id="UP000234681">
    <property type="component" value="Chromosome 12"/>
</dbReference>
<dbReference type="Bgee" id="ENSRNOG00000001274">
    <property type="expression patterns" value="Expressed in Ammon's horn and 20 other cell types or tissues"/>
</dbReference>
<dbReference type="ExpressionAtlas" id="B2RZ78">
    <property type="expression patterns" value="baseline and differential"/>
</dbReference>
<dbReference type="GO" id="GO:0005829">
    <property type="term" value="C:cytosol"/>
    <property type="evidence" value="ECO:0000266"/>
    <property type="project" value="RGD"/>
</dbReference>
<dbReference type="GO" id="GO:0005769">
    <property type="term" value="C:early endosome"/>
    <property type="evidence" value="ECO:0007669"/>
    <property type="project" value="UniProtKB-SubCell"/>
</dbReference>
<dbReference type="GO" id="GO:0005768">
    <property type="term" value="C:endosome"/>
    <property type="evidence" value="ECO:0000318"/>
    <property type="project" value="GO_Central"/>
</dbReference>
<dbReference type="GO" id="GO:0010008">
    <property type="term" value="C:endosome membrane"/>
    <property type="evidence" value="ECO:0007669"/>
    <property type="project" value="UniProtKB-SubCell"/>
</dbReference>
<dbReference type="GO" id="GO:0005770">
    <property type="term" value="C:late endosome"/>
    <property type="evidence" value="ECO:0007669"/>
    <property type="project" value="UniProtKB-SubCell"/>
</dbReference>
<dbReference type="GO" id="GO:0030904">
    <property type="term" value="C:retromer complex"/>
    <property type="evidence" value="ECO:0000250"/>
    <property type="project" value="UniProtKB"/>
</dbReference>
<dbReference type="GO" id="GO:0030906">
    <property type="term" value="C:retromer, cargo-selective complex"/>
    <property type="evidence" value="ECO:0000266"/>
    <property type="project" value="RGD"/>
</dbReference>
<dbReference type="GO" id="GO:0046872">
    <property type="term" value="F:metal ion binding"/>
    <property type="evidence" value="ECO:0007669"/>
    <property type="project" value="UniProtKB-KW"/>
</dbReference>
<dbReference type="GO" id="GO:0032456">
    <property type="term" value="P:endocytic recycling"/>
    <property type="evidence" value="ECO:0000250"/>
    <property type="project" value="UniProtKB"/>
</dbReference>
<dbReference type="GO" id="GO:0006886">
    <property type="term" value="P:intracellular protein transport"/>
    <property type="evidence" value="ECO:0000318"/>
    <property type="project" value="GO_Central"/>
</dbReference>
<dbReference type="GO" id="GO:0042147">
    <property type="term" value="P:retrograde transport, endosome to Golgi"/>
    <property type="evidence" value="ECO:0000318"/>
    <property type="project" value="GO_Central"/>
</dbReference>
<dbReference type="CDD" id="cd07394">
    <property type="entry name" value="MPP_Vps29"/>
    <property type="match status" value="1"/>
</dbReference>
<dbReference type="FunFam" id="3.60.21.10:FF:000009">
    <property type="entry name" value="Vacuolar protein sorting-associated protein 29"/>
    <property type="match status" value="1"/>
</dbReference>
<dbReference type="Gene3D" id="3.60.21.10">
    <property type="match status" value="1"/>
</dbReference>
<dbReference type="InterPro" id="IPR024654">
    <property type="entry name" value="Calcineurin-like_PHP_lpxH"/>
</dbReference>
<dbReference type="InterPro" id="IPR029052">
    <property type="entry name" value="Metallo-depent_PP-like"/>
</dbReference>
<dbReference type="InterPro" id="IPR000979">
    <property type="entry name" value="Phosphodiesterase_MJ0936/Vps29"/>
</dbReference>
<dbReference type="InterPro" id="IPR028661">
    <property type="entry name" value="Vps29"/>
</dbReference>
<dbReference type="NCBIfam" id="TIGR00040">
    <property type="entry name" value="yfcE"/>
    <property type="match status" value="1"/>
</dbReference>
<dbReference type="PANTHER" id="PTHR11124">
    <property type="entry name" value="VACUOLAR SORTING PROTEIN VPS29"/>
    <property type="match status" value="1"/>
</dbReference>
<dbReference type="Pfam" id="PF12850">
    <property type="entry name" value="Metallophos_2"/>
    <property type="match status" value="1"/>
</dbReference>
<dbReference type="SUPFAM" id="SSF56300">
    <property type="entry name" value="Metallo-dependent phosphatases"/>
    <property type="match status" value="1"/>
</dbReference>
<sequence>MLVLVLGDLHIPHRCNSLPAKFKKLLVPGKIQHILCTGNLCTKESYDYLKTLAGDVHIVRGDFDESLNYPEQKVVTVGQFKIGLIHGHQVIPWGDMASLALLQRQFDVDILISGHTHKFEAFEHENKFYINPGSATGAYNALETNIIPSFVLMDIQASTVVTYVYQLIGDDVKVERIEYKKS</sequence>